<reference key="1">
    <citation type="journal article" date="2003" name="Lancet">
        <title>Genome sequence of Vibrio parahaemolyticus: a pathogenic mechanism distinct from that of V. cholerae.</title>
        <authorList>
            <person name="Makino K."/>
            <person name="Oshima K."/>
            <person name="Kurokawa K."/>
            <person name="Yokoyama K."/>
            <person name="Uda T."/>
            <person name="Tagomori K."/>
            <person name="Iijima Y."/>
            <person name="Najima M."/>
            <person name="Nakano M."/>
            <person name="Yamashita A."/>
            <person name="Kubota Y."/>
            <person name="Kimura S."/>
            <person name="Yasunaga T."/>
            <person name="Honda T."/>
            <person name="Shinagawa H."/>
            <person name="Hattori M."/>
            <person name="Iida T."/>
        </authorList>
    </citation>
    <scope>NUCLEOTIDE SEQUENCE [LARGE SCALE GENOMIC DNA]</scope>
    <source>
        <strain>RIMD 2210633</strain>
    </source>
</reference>
<accession>Q87T07</accession>
<feature type="chain" id="PRO_0000130231" description="Small ribosomal subunit protein uS3">
    <location>
        <begin position="1"/>
        <end position="232"/>
    </location>
</feature>
<feature type="domain" description="KH type-2" evidence="1">
    <location>
        <begin position="39"/>
        <end position="107"/>
    </location>
</feature>
<feature type="region of interest" description="Disordered" evidence="2">
    <location>
        <begin position="213"/>
        <end position="232"/>
    </location>
</feature>
<organism>
    <name type="scientific">Vibrio parahaemolyticus serotype O3:K6 (strain RIMD 2210633)</name>
    <dbReference type="NCBI Taxonomy" id="223926"/>
    <lineage>
        <taxon>Bacteria</taxon>
        <taxon>Pseudomonadati</taxon>
        <taxon>Pseudomonadota</taxon>
        <taxon>Gammaproteobacteria</taxon>
        <taxon>Vibrionales</taxon>
        <taxon>Vibrionaceae</taxon>
        <taxon>Vibrio</taxon>
    </lineage>
</organism>
<evidence type="ECO:0000255" key="1">
    <source>
        <dbReference type="HAMAP-Rule" id="MF_01309"/>
    </source>
</evidence>
<evidence type="ECO:0000256" key="2">
    <source>
        <dbReference type="SAM" id="MobiDB-lite"/>
    </source>
</evidence>
<evidence type="ECO:0000305" key="3"/>
<proteinExistence type="inferred from homology"/>
<sequence length="232" mass="25581">MGQKVHPNGIRLGIVKPWNATWFANTKDFADNLDGDFKVRQFLTSELKKASLSRIVIERPAKSIRVTIHTARPGVVIGKKGEDVEKLRAAVAKIAGVPAQINIAEVRKPELDAQLVGDSIASQLERRVMFRRAMKRAVQNAMRLGAKGIKVEVSGRLGGAEIARSEWYREGRVPLHTLRADIDYATSSAHTQYGVIGIKTWIFKGEILGGMPAANAVEPKGDKPKKQRKGRK</sequence>
<name>RS3_VIBPA</name>
<keyword id="KW-0687">Ribonucleoprotein</keyword>
<keyword id="KW-0689">Ribosomal protein</keyword>
<keyword id="KW-0694">RNA-binding</keyword>
<keyword id="KW-0699">rRNA-binding</keyword>
<gene>
    <name evidence="1" type="primary">rpsC</name>
    <name type="ordered locus">VP0263</name>
</gene>
<protein>
    <recommendedName>
        <fullName evidence="1">Small ribosomal subunit protein uS3</fullName>
    </recommendedName>
    <alternativeName>
        <fullName evidence="3">30S ribosomal protein S3</fullName>
    </alternativeName>
</protein>
<comment type="function">
    <text evidence="1">Binds the lower part of the 30S subunit head. Binds mRNA in the 70S ribosome, positioning it for translation.</text>
</comment>
<comment type="subunit">
    <text evidence="1">Part of the 30S ribosomal subunit. Forms a tight complex with proteins S10 and S14.</text>
</comment>
<comment type="similarity">
    <text evidence="1">Belongs to the universal ribosomal protein uS3 family.</text>
</comment>
<dbReference type="EMBL" id="BA000031">
    <property type="protein sequence ID" value="BAC58526.1"/>
    <property type="molecule type" value="Genomic_DNA"/>
</dbReference>
<dbReference type="RefSeq" id="NP_796642.1">
    <property type="nucleotide sequence ID" value="NC_004603.1"/>
</dbReference>
<dbReference type="RefSeq" id="WP_005383161.1">
    <property type="nucleotide sequence ID" value="NC_004603.1"/>
</dbReference>
<dbReference type="SMR" id="Q87T07"/>
<dbReference type="GeneID" id="75168980"/>
<dbReference type="KEGG" id="vpa:VP0263"/>
<dbReference type="PATRIC" id="fig|223926.6.peg.254"/>
<dbReference type="eggNOG" id="COG0092">
    <property type="taxonomic scope" value="Bacteria"/>
</dbReference>
<dbReference type="HOGENOM" id="CLU_058591_0_2_6"/>
<dbReference type="Proteomes" id="UP000002493">
    <property type="component" value="Chromosome 1"/>
</dbReference>
<dbReference type="GO" id="GO:0022627">
    <property type="term" value="C:cytosolic small ribosomal subunit"/>
    <property type="evidence" value="ECO:0007669"/>
    <property type="project" value="TreeGrafter"/>
</dbReference>
<dbReference type="GO" id="GO:0003729">
    <property type="term" value="F:mRNA binding"/>
    <property type="evidence" value="ECO:0007669"/>
    <property type="project" value="UniProtKB-UniRule"/>
</dbReference>
<dbReference type="GO" id="GO:0019843">
    <property type="term" value="F:rRNA binding"/>
    <property type="evidence" value="ECO:0007669"/>
    <property type="project" value="UniProtKB-UniRule"/>
</dbReference>
<dbReference type="GO" id="GO:0003735">
    <property type="term" value="F:structural constituent of ribosome"/>
    <property type="evidence" value="ECO:0007669"/>
    <property type="project" value="InterPro"/>
</dbReference>
<dbReference type="GO" id="GO:0006412">
    <property type="term" value="P:translation"/>
    <property type="evidence" value="ECO:0007669"/>
    <property type="project" value="UniProtKB-UniRule"/>
</dbReference>
<dbReference type="CDD" id="cd02412">
    <property type="entry name" value="KH-II_30S_S3"/>
    <property type="match status" value="1"/>
</dbReference>
<dbReference type="FunFam" id="3.30.1140.32:FF:000001">
    <property type="entry name" value="30S ribosomal protein S3"/>
    <property type="match status" value="1"/>
</dbReference>
<dbReference type="FunFam" id="3.30.300.20:FF:000001">
    <property type="entry name" value="30S ribosomal protein S3"/>
    <property type="match status" value="1"/>
</dbReference>
<dbReference type="Gene3D" id="3.30.300.20">
    <property type="match status" value="1"/>
</dbReference>
<dbReference type="Gene3D" id="3.30.1140.32">
    <property type="entry name" value="Ribosomal protein S3, C-terminal domain"/>
    <property type="match status" value="1"/>
</dbReference>
<dbReference type="HAMAP" id="MF_01309_B">
    <property type="entry name" value="Ribosomal_uS3_B"/>
    <property type="match status" value="1"/>
</dbReference>
<dbReference type="InterPro" id="IPR004087">
    <property type="entry name" value="KH_dom"/>
</dbReference>
<dbReference type="InterPro" id="IPR015946">
    <property type="entry name" value="KH_dom-like_a/b"/>
</dbReference>
<dbReference type="InterPro" id="IPR004044">
    <property type="entry name" value="KH_dom_type_2"/>
</dbReference>
<dbReference type="InterPro" id="IPR009019">
    <property type="entry name" value="KH_sf_prok-type"/>
</dbReference>
<dbReference type="InterPro" id="IPR036419">
    <property type="entry name" value="Ribosomal_S3_C_sf"/>
</dbReference>
<dbReference type="InterPro" id="IPR005704">
    <property type="entry name" value="Ribosomal_uS3_bac-typ"/>
</dbReference>
<dbReference type="InterPro" id="IPR001351">
    <property type="entry name" value="Ribosomal_uS3_C"/>
</dbReference>
<dbReference type="InterPro" id="IPR018280">
    <property type="entry name" value="Ribosomal_uS3_CS"/>
</dbReference>
<dbReference type="NCBIfam" id="TIGR01009">
    <property type="entry name" value="rpsC_bact"/>
    <property type="match status" value="1"/>
</dbReference>
<dbReference type="PANTHER" id="PTHR11760">
    <property type="entry name" value="30S/40S RIBOSOMAL PROTEIN S3"/>
    <property type="match status" value="1"/>
</dbReference>
<dbReference type="PANTHER" id="PTHR11760:SF19">
    <property type="entry name" value="SMALL RIBOSOMAL SUBUNIT PROTEIN US3C"/>
    <property type="match status" value="1"/>
</dbReference>
<dbReference type="Pfam" id="PF07650">
    <property type="entry name" value="KH_2"/>
    <property type="match status" value="1"/>
</dbReference>
<dbReference type="Pfam" id="PF00189">
    <property type="entry name" value="Ribosomal_S3_C"/>
    <property type="match status" value="1"/>
</dbReference>
<dbReference type="SMART" id="SM00322">
    <property type="entry name" value="KH"/>
    <property type="match status" value="1"/>
</dbReference>
<dbReference type="SUPFAM" id="SSF54814">
    <property type="entry name" value="Prokaryotic type KH domain (KH-domain type II)"/>
    <property type="match status" value="1"/>
</dbReference>
<dbReference type="SUPFAM" id="SSF54821">
    <property type="entry name" value="Ribosomal protein S3 C-terminal domain"/>
    <property type="match status" value="1"/>
</dbReference>
<dbReference type="PROSITE" id="PS50823">
    <property type="entry name" value="KH_TYPE_2"/>
    <property type="match status" value="1"/>
</dbReference>
<dbReference type="PROSITE" id="PS00548">
    <property type="entry name" value="RIBOSOMAL_S3"/>
    <property type="match status" value="1"/>
</dbReference>